<proteinExistence type="inferred from homology"/>
<sequence length="410" mass="45798">MDSFSQKLNTYAQLAVEVGVNVQKGQYVVVNASTDVRDFVRLIVKHAYEKGAKNVTVNWQDDEVAKLKYELAPFEAFEEYPEWEAKGREELAKNGAAFISVVSSNPDLLKGIDSKRIAAFQKAAGKALHTYRQYIQSDKVSWTVVGAASAGWAHKVFPGKSEEEAIHLLWEEIFKATRVNEDNPVQAWINHDQNLHEKVDHLNERHYAALHYQAEGTDLTIKLPRKHVWAGAGSVNESGHEFMANMPTEEVFTLPQKDGVDGVVSSTKPLSYGGNIIENFTLTFENGRIVDIKAEKGEDILKELVETDEGSHYLGEVALVPYDSPISQSNILFYNTLFDENASNHLAIGSAYAFNIEGGKQMSREELVKEGLNESITHVDFMIGSKDMNIDGITADGKREPIFRNGNWAF</sequence>
<evidence type="ECO:0000250" key="1"/>
<evidence type="ECO:0000250" key="2">
    <source>
        <dbReference type="UniProtKB" id="P42778"/>
    </source>
</evidence>
<evidence type="ECO:0000305" key="3"/>
<organism>
    <name type="scientific">Bacillus subtilis (strain 168)</name>
    <dbReference type="NCBI Taxonomy" id="224308"/>
    <lineage>
        <taxon>Bacteria</taxon>
        <taxon>Bacillati</taxon>
        <taxon>Bacillota</taxon>
        <taxon>Bacilli</taxon>
        <taxon>Bacillales</taxon>
        <taxon>Bacillaceae</taxon>
        <taxon>Bacillus</taxon>
    </lineage>
</organism>
<gene>
    <name type="primary">ampS</name>
    <name type="ordered locus">BSU14450</name>
</gene>
<feature type="chain" id="PRO_0000079174" description="Aminopeptidase AmpS">
    <location>
        <begin position="1"/>
        <end position="410"/>
    </location>
</feature>
<feature type="binding site" evidence="2">
    <location>
        <position position="250"/>
    </location>
    <ligand>
        <name>a divalent metal cation</name>
        <dbReference type="ChEBI" id="CHEBI:60240"/>
        <label>1</label>
    </ligand>
</feature>
<feature type="binding site" evidence="2">
    <location>
        <position position="316"/>
    </location>
    <ligand>
        <name>a divalent metal cation</name>
        <dbReference type="ChEBI" id="CHEBI:60240"/>
        <label>1</label>
    </ligand>
</feature>
<feature type="binding site" evidence="2">
    <location>
        <position position="316"/>
    </location>
    <ligand>
        <name>a divalent metal cation</name>
        <dbReference type="ChEBI" id="CHEBI:60240"/>
        <label>2</label>
    </ligand>
</feature>
<feature type="binding site" evidence="2">
    <location>
        <position position="340"/>
    </location>
    <ligand>
        <name>a divalent metal cation</name>
        <dbReference type="ChEBI" id="CHEBI:60240"/>
        <label>1</label>
    </ligand>
</feature>
<feature type="binding site" evidence="2">
    <location>
        <position position="340"/>
    </location>
    <ligand>
        <name>a divalent metal cation</name>
        <dbReference type="ChEBI" id="CHEBI:60240"/>
        <label>2</label>
    </ligand>
</feature>
<feature type="binding site" evidence="2">
    <location>
        <position position="345"/>
    </location>
    <ligand>
        <name>a divalent metal cation</name>
        <dbReference type="ChEBI" id="CHEBI:60240"/>
        <label>1</label>
    </ligand>
</feature>
<feature type="binding site" evidence="2">
    <location>
        <position position="378"/>
    </location>
    <ligand>
        <name>a divalent metal cation</name>
        <dbReference type="ChEBI" id="CHEBI:60240"/>
        <label>2</label>
    </ligand>
</feature>
<feature type="binding site" evidence="2">
    <location>
        <position position="380"/>
    </location>
    <ligand>
        <name>a divalent metal cation</name>
        <dbReference type="ChEBI" id="CHEBI:60240"/>
        <label>2</label>
    </ligand>
</feature>
<comment type="function">
    <text evidence="1">Metal-dependent exopeptidase.</text>
</comment>
<comment type="cofactor">
    <cofactor evidence="2">
        <name>Co(2+)</name>
        <dbReference type="ChEBI" id="CHEBI:48828"/>
    </cofactor>
    <cofactor evidence="2">
        <name>Zn(2+)</name>
        <dbReference type="ChEBI" id="CHEBI:29105"/>
    </cofactor>
    <cofactor evidence="2">
        <name>Mg(2+)</name>
        <dbReference type="ChEBI" id="CHEBI:18420"/>
    </cofactor>
    <text evidence="2">Binds 2 divalent metal cations per subunit. Can use cobalt, zinc, and possibly also magnesium ions.</text>
</comment>
<comment type="similarity">
    <text evidence="3">Belongs to the peptidase M29 family.</text>
</comment>
<reference key="1">
    <citation type="journal article" date="1996" name="Microbiology">
        <title>The ampS-nprE (124 degrees-127 degrees) region of the Bacillus subtilis 168 chromosome: sequencing of a 27 kb segment and identification of several genes in the area.</title>
        <authorList>
            <person name="Winters P."/>
            <person name="Caldwell R.M."/>
            <person name="Enfield L."/>
            <person name="Ferrari E."/>
        </authorList>
    </citation>
    <scope>NUCLEOTIDE SEQUENCE [GENOMIC DNA]</scope>
    <source>
        <strain>168</strain>
    </source>
</reference>
<reference key="2">
    <citation type="submission" date="1997-07" db="EMBL/GenBank/DDBJ databases">
        <title>Sequence analysis of the mobA-ampS region of the Bacillus subtilis chromosome.</title>
        <authorList>
            <person name="Caldwell R.M."/>
            <person name="Ferrari E."/>
        </authorList>
    </citation>
    <scope>NUCLEOTIDE SEQUENCE [GENOMIC DNA]</scope>
    <source>
        <strain>168</strain>
    </source>
</reference>
<reference key="3">
    <citation type="journal article" date="1997" name="Nature">
        <title>The complete genome sequence of the Gram-positive bacterium Bacillus subtilis.</title>
        <authorList>
            <person name="Kunst F."/>
            <person name="Ogasawara N."/>
            <person name="Moszer I."/>
            <person name="Albertini A.M."/>
            <person name="Alloni G."/>
            <person name="Azevedo V."/>
            <person name="Bertero M.G."/>
            <person name="Bessieres P."/>
            <person name="Bolotin A."/>
            <person name="Borchert S."/>
            <person name="Borriss R."/>
            <person name="Boursier L."/>
            <person name="Brans A."/>
            <person name="Braun M."/>
            <person name="Brignell S.C."/>
            <person name="Bron S."/>
            <person name="Brouillet S."/>
            <person name="Bruschi C.V."/>
            <person name="Caldwell B."/>
            <person name="Capuano V."/>
            <person name="Carter N.M."/>
            <person name="Choi S.-K."/>
            <person name="Codani J.-J."/>
            <person name="Connerton I.F."/>
            <person name="Cummings N.J."/>
            <person name="Daniel R.A."/>
            <person name="Denizot F."/>
            <person name="Devine K.M."/>
            <person name="Duesterhoeft A."/>
            <person name="Ehrlich S.D."/>
            <person name="Emmerson P.T."/>
            <person name="Entian K.-D."/>
            <person name="Errington J."/>
            <person name="Fabret C."/>
            <person name="Ferrari E."/>
            <person name="Foulger D."/>
            <person name="Fritz C."/>
            <person name="Fujita M."/>
            <person name="Fujita Y."/>
            <person name="Fuma S."/>
            <person name="Galizzi A."/>
            <person name="Galleron N."/>
            <person name="Ghim S.-Y."/>
            <person name="Glaser P."/>
            <person name="Goffeau A."/>
            <person name="Golightly E.J."/>
            <person name="Grandi G."/>
            <person name="Guiseppi G."/>
            <person name="Guy B.J."/>
            <person name="Haga K."/>
            <person name="Haiech J."/>
            <person name="Harwood C.R."/>
            <person name="Henaut A."/>
            <person name="Hilbert H."/>
            <person name="Holsappel S."/>
            <person name="Hosono S."/>
            <person name="Hullo M.-F."/>
            <person name="Itaya M."/>
            <person name="Jones L.-M."/>
            <person name="Joris B."/>
            <person name="Karamata D."/>
            <person name="Kasahara Y."/>
            <person name="Klaerr-Blanchard M."/>
            <person name="Klein C."/>
            <person name="Kobayashi Y."/>
            <person name="Koetter P."/>
            <person name="Koningstein G."/>
            <person name="Krogh S."/>
            <person name="Kumano M."/>
            <person name="Kurita K."/>
            <person name="Lapidus A."/>
            <person name="Lardinois S."/>
            <person name="Lauber J."/>
            <person name="Lazarevic V."/>
            <person name="Lee S.-M."/>
            <person name="Levine A."/>
            <person name="Liu H."/>
            <person name="Masuda S."/>
            <person name="Mauel C."/>
            <person name="Medigue C."/>
            <person name="Medina N."/>
            <person name="Mellado R.P."/>
            <person name="Mizuno M."/>
            <person name="Moestl D."/>
            <person name="Nakai S."/>
            <person name="Noback M."/>
            <person name="Noone D."/>
            <person name="O'Reilly M."/>
            <person name="Ogawa K."/>
            <person name="Ogiwara A."/>
            <person name="Oudega B."/>
            <person name="Park S.-H."/>
            <person name="Parro V."/>
            <person name="Pohl T.M."/>
            <person name="Portetelle D."/>
            <person name="Porwollik S."/>
            <person name="Prescott A.M."/>
            <person name="Presecan E."/>
            <person name="Pujic P."/>
            <person name="Purnelle B."/>
            <person name="Rapoport G."/>
            <person name="Rey M."/>
            <person name="Reynolds S."/>
            <person name="Rieger M."/>
            <person name="Rivolta C."/>
            <person name="Rocha E."/>
            <person name="Roche B."/>
            <person name="Rose M."/>
            <person name="Sadaie Y."/>
            <person name="Sato T."/>
            <person name="Scanlan E."/>
            <person name="Schleich S."/>
            <person name="Schroeter R."/>
            <person name="Scoffone F."/>
            <person name="Sekiguchi J."/>
            <person name="Sekowska A."/>
            <person name="Seror S.J."/>
            <person name="Serror P."/>
            <person name="Shin B.-S."/>
            <person name="Soldo B."/>
            <person name="Sorokin A."/>
            <person name="Tacconi E."/>
            <person name="Takagi T."/>
            <person name="Takahashi H."/>
            <person name="Takemaru K."/>
            <person name="Takeuchi M."/>
            <person name="Tamakoshi A."/>
            <person name="Tanaka T."/>
            <person name="Terpstra P."/>
            <person name="Tognoni A."/>
            <person name="Tosato V."/>
            <person name="Uchiyama S."/>
            <person name="Vandenbol M."/>
            <person name="Vannier F."/>
            <person name="Vassarotti A."/>
            <person name="Viari A."/>
            <person name="Wambutt R."/>
            <person name="Wedler E."/>
            <person name="Wedler H."/>
            <person name="Weitzenegger T."/>
            <person name="Winters P."/>
            <person name="Wipat A."/>
            <person name="Yamamoto H."/>
            <person name="Yamane K."/>
            <person name="Yasumoto K."/>
            <person name="Yata K."/>
            <person name="Yoshida K."/>
            <person name="Yoshikawa H.-F."/>
            <person name="Zumstein E."/>
            <person name="Yoshikawa H."/>
            <person name="Danchin A."/>
        </authorList>
    </citation>
    <scope>NUCLEOTIDE SEQUENCE [LARGE SCALE GENOMIC DNA]</scope>
    <source>
        <strain>168</strain>
    </source>
</reference>
<reference key="4">
    <citation type="submission" date="1994-07" db="EMBL/GenBank/DDBJ databases">
        <title>The nucleotide sequence analysis of kinC region.</title>
        <authorList>
            <person name="Kobayashi K."/>
            <person name="Sato T."/>
            <person name="Kobayashi Y."/>
        </authorList>
    </citation>
    <scope>NUCLEOTIDE SEQUENCE [GENOMIC DNA] OF 1-291</scope>
    <source>
        <strain>168 / JH642</strain>
    </source>
</reference>
<protein>
    <recommendedName>
        <fullName>Aminopeptidase AmpS</fullName>
        <ecNumber>3.4.11.-</ecNumber>
    </recommendedName>
</protein>
<dbReference type="EC" id="3.4.11.-"/>
<dbReference type="EMBL" id="AF012285">
    <property type="protein sequence ID" value="AAC24920.1"/>
    <property type="molecule type" value="Genomic_DNA"/>
</dbReference>
<dbReference type="EMBL" id="AL009126">
    <property type="protein sequence ID" value="CAB13318.1"/>
    <property type="molecule type" value="Genomic_DNA"/>
</dbReference>
<dbReference type="EMBL" id="D37799">
    <property type="protein sequence ID" value="BAA07046.1"/>
    <property type="molecule type" value="Genomic_DNA"/>
</dbReference>
<dbReference type="PIR" id="C69585">
    <property type="entry name" value="C69585"/>
</dbReference>
<dbReference type="RefSeq" id="NP_389328.1">
    <property type="nucleotide sequence ID" value="NC_000964.3"/>
</dbReference>
<dbReference type="RefSeq" id="WP_003232341.1">
    <property type="nucleotide sequence ID" value="NZ_OZ025638.1"/>
</dbReference>
<dbReference type="SMR" id="P39762"/>
<dbReference type="FunCoup" id="P39762">
    <property type="interactions" value="3"/>
</dbReference>
<dbReference type="IntAct" id="P39762">
    <property type="interactions" value="1"/>
</dbReference>
<dbReference type="STRING" id="224308.BSU14450"/>
<dbReference type="MEROPS" id="M29.002"/>
<dbReference type="PaxDb" id="224308-BSU14450"/>
<dbReference type="EnsemblBacteria" id="CAB13318">
    <property type="protein sequence ID" value="CAB13318"/>
    <property type="gene ID" value="BSU_14450"/>
</dbReference>
<dbReference type="GeneID" id="938756"/>
<dbReference type="KEGG" id="bsu:BSU14450"/>
<dbReference type="PATRIC" id="fig|224308.179.peg.1575"/>
<dbReference type="eggNOG" id="COG2309">
    <property type="taxonomic scope" value="Bacteria"/>
</dbReference>
<dbReference type="InParanoid" id="P39762"/>
<dbReference type="OrthoDB" id="9803993at2"/>
<dbReference type="PhylomeDB" id="P39762"/>
<dbReference type="BioCyc" id="BSUB:BSU14450-MONOMER"/>
<dbReference type="Proteomes" id="UP000001570">
    <property type="component" value="Chromosome"/>
</dbReference>
<dbReference type="GO" id="GO:0004177">
    <property type="term" value="F:aminopeptidase activity"/>
    <property type="evidence" value="ECO:0007669"/>
    <property type="project" value="UniProtKB-KW"/>
</dbReference>
<dbReference type="GO" id="GO:0046872">
    <property type="term" value="F:metal ion binding"/>
    <property type="evidence" value="ECO:0007669"/>
    <property type="project" value="UniProtKB-KW"/>
</dbReference>
<dbReference type="GO" id="GO:0008237">
    <property type="term" value="F:metallopeptidase activity"/>
    <property type="evidence" value="ECO:0007669"/>
    <property type="project" value="UniProtKB-KW"/>
</dbReference>
<dbReference type="GO" id="GO:0006508">
    <property type="term" value="P:proteolysis"/>
    <property type="evidence" value="ECO:0007669"/>
    <property type="project" value="UniProtKB-KW"/>
</dbReference>
<dbReference type="Gene3D" id="3.40.1830.10">
    <property type="entry name" value="Thermophilic metalloprotease (M29)"/>
    <property type="match status" value="1"/>
</dbReference>
<dbReference type="InterPro" id="IPR052170">
    <property type="entry name" value="M29_Exopeptidase"/>
</dbReference>
<dbReference type="InterPro" id="IPR035097">
    <property type="entry name" value="M29_N-terminal"/>
</dbReference>
<dbReference type="InterPro" id="IPR000787">
    <property type="entry name" value="Peptidase_M29"/>
</dbReference>
<dbReference type="PANTHER" id="PTHR34448">
    <property type="entry name" value="AMINOPEPTIDASE"/>
    <property type="match status" value="1"/>
</dbReference>
<dbReference type="PANTHER" id="PTHR34448:SF3">
    <property type="entry name" value="AMINOPEPTIDASE AMPS"/>
    <property type="match status" value="1"/>
</dbReference>
<dbReference type="Pfam" id="PF02073">
    <property type="entry name" value="Peptidase_M29"/>
    <property type="match status" value="1"/>
</dbReference>
<dbReference type="PRINTS" id="PR00919">
    <property type="entry name" value="THERMOPTASE"/>
</dbReference>
<dbReference type="SUPFAM" id="SSF144052">
    <property type="entry name" value="Thermophilic metalloprotease-like"/>
    <property type="match status" value="1"/>
</dbReference>
<accession>P39762</accession>
<name>AMPS_BACSU</name>
<keyword id="KW-0031">Aminopeptidase</keyword>
<keyword id="KW-0378">Hydrolase</keyword>
<keyword id="KW-0479">Metal-binding</keyword>
<keyword id="KW-0482">Metalloprotease</keyword>
<keyword id="KW-0645">Protease</keyword>
<keyword id="KW-1185">Reference proteome</keyword>
<keyword id="KW-0862">Zinc</keyword>